<name>RHLB_SALTY</name>
<sequence length="421" mass="47093">MSKTHLTEQKFSDFALHPQVVEALEKKGFYNCTPIQALALPLTLAGRDVAGQAQTGTGKTMAFLTSTFHYLLSHPAIDDRKVNQPRALIMAPTRELAVQIHADAEPLAQATGLKLGLAYGGDGYDKQLKVLESGVDILIGTTGRLIDYAKQNHINLGAIQVVVLDEADRMYDLGFIKDIRWLFRRMPPAAQRLNMLFSATLSYRVRELAFEQMNNAEYVEVEPEQKTGHRIKEELFYPSNEEKMRLLQTLIEEEWPDRAIIFANTKHRCEDIWGHLAADGHRVGLLTGDVAQKKRLRILDEFTRGDLDILVATDVAARGLHIPAVTHVFNYDLPDDCEDYVHRIGRTGRAGASGHSISLACEEYALNLPAIESYIGHSIPVSKYNPEALMNDLPKPLRLTRSRPGNGPRRAGAPRNRRRSG</sequence>
<feature type="initiator methionine" description="Removed" evidence="1">
    <location>
        <position position="1"/>
    </location>
</feature>
<feature type="chain" id="PRO_0000200783" description="ATP-dependent RNA helicase RhlB">
    <location>
        <begin position="2"/>
        <end position="421"/>
    </location>
</feature>
<feature type="domain" description="Helicase ATP-binding" evidence="2">
    <location>
        <begin position="40"/>
        <end position="219"/>
    </location>
</feature>
<feature type="domain" description="Helicase C-terminal" evidence="2">
    <location>
        <begin position="245"/>
        <end position="390"/>
    </location>
</feature>
<feature type="region of interest" description="Disordered" evidence="3">
    <location>
        <begin position="396"/>
        <end position="421"/>
    </location>
</feature>
<feature type="short sequence motif" description="Q motif">
    <location>
        <begin position="9"/>
        <end position="37"/>
    </location>
</feature>
<feature type="short sequence motif" description="DEAD box">
    <location>
        <begin position="165"/>
        <end position="168"/>
    </location>
</feature>
<feature type="compositionally biased region" description="Low complexity" evidence="3">
    <location>
        <begin position="402"/>
        <end position="414"/>
    </location>
</feature>
<feature type="binding site" evidence="2">
    <location>
        <begin position="53"/>
        <end position="60"/>
    </location>
    <ligand>
        <name>ATP</name>
        <dbReference type="ChEBI" id="CHEBI:30616"/>
    </ligand>
</feature>
<comment type="function">
    <text evidence="2">DEAD-box RNA helicase involved in RNA degradation. Has RNA-dependent ATPase activity and unwinds double-stranded RNA.</text>
</comment>
<comment type="catalytic activity">
    <reaction evidence="2">
        <text>ATP + H2O = ADP + phosphate + H(+)</text>
        <dbReference type="Rhea" id="RHEA:13065"/>
        <dbReference type="ChEBI" id="CHEBI:15377"/>
        <dbReference type="ChEBI" id="CHEBI:15378"/>
        <dbReference type="ChEBI" id="CHEBI:30616"/>
        <dbReference type="ChEBI" id="CHEBI:43474"/>
        <dbReference type="ChEBI" id="CHEBI:456216"/>
        <dbReference type="EC" id="3.6.4.13"/>
    </reaction>
</comment>
<comment type="subunit">
    <text evidence="2">Component of the RNA degradosome, which is a multiprotein complex involved in RNA processing and mRNA degradation.</text>
</comment>
<comment type="subcellular location">
    <subcellularLocation>
        <location evidence="2">Cytoplasm</location>
    </subcellularLocation>
</comment>
<comment type="similarity">
    <text evidence="2">Belongs to the DEAD box helicase family. RhlB subfamily.</text>
</comment>
<comment type="sequence caution" evidence="4">
    <conflict type="frameshift">
        <sequence resource="EMBL-CDS" id="AAF33472"/>
    </conflict>
</comment>
<comment type="sequence caution" evidence="4">
    <conflict type="frameshift">
        <sequence resource="EMBL" id="D10015"/>
    </conflict>
</comment>
<protein>
    <recommendedName>
        <fullName evidence="2">ATP-dependent RNA helicase RhlB</fullName>
        <ecNumber evidence="2">3.6.4.13</ecNumber>
    </recommendedName>
</protein>
<dbReference type="EC" id="3.6.4.13" evidence="2"/>
<dbReference type="EMBL" id="AF233324">
    <property type="protein sequence ID" value="AAF33472.1"/>
    <property type="status" value="ALT_FRAME"/>
    <property type="molecule type" value="Genomic_DNA"/>
</dbReference>
<dbReference type="EMBL" id="AE006468">
    <property type="protein sequence ID" value="AAL22764.1"/>
    <property type="molecule type" value="Genomic_DNA"/>
</dbReference>
<dbReference type="EMBL" id="D10015">
    <property type="status" value="NOT_ANNOTATED_CDS"/>
    <property type="molecule type" value="Genomic_DNA"/>
</dbReference>
<dbReference type="RefSeq" id="NP_462805.1">
    <property type="nucleotide sequence ID" value="NC_003197.2"/>
</dbReference>
<dbReference type="RefSeq" id="WP_000047525.1">
    <property type="nucleotide sequence ID" value="NC_003197.2"/>
</dbReference>
<dbReference type="SMR" id="P0A2P0"/>
<dbReference type="STRING" id="99287.STM3914"/>
<dbReference type="PaxDb" id="99287-STM3914"/>
<dbReference type="GeneID" id="1255440"/>
<dbReference type="KEGG" id="stm:STM3914"/>
<dbReference type="PATRIC" id="fig|99287.12.peg.4136"/>
<dbReference type="HOGENOM" id="CLU_003041_1_3_6"/>
<dbReference type="OMA" id="TRFHDFK"/>
<dbReference type="PhylomeDB" id="P0A2P0"/>
<dbReference type="BioCyc" id="SENT99287:STM3914-MONOMER"/>
<dbReference type="Proteomes" id="UP000001014">
    <property type="component" value="Chromosome"/>
</dbReference>
<dbReference type="GO" id="GO:0005829">
    <property type="term" value="C:cytosol"/>
    <property type="evidence" value="ECO:0000318"/>
    <property type="project" value="GO_Central"/>
</dbReference>
<dbReference type="GO" id="GO:0005524">
    <property type="term" value="F:ATP binding"/>
    <property type="evidence" value="ECO:0007669"/>
    <property type="project" value="UniProtKB-UniRule"/>
</dbReference>
<dbReference type="GO" id="GO:0016887">
    <property type="term" value="F:ATP hydrolysis activity"/>
    <property type="evidence" value="ECO:0007669"/>
    <property type="project" value="RHEA"/>
</dbReference>
<dbReference type="GO" id="GO:0003723">
    <property type="term" value="F:RNA binding"/>
    <property type="evidence" value="ECO:0007669"/>
    <property type="project" value="UniProtKB-UniRule"/>
</dbReference>
<dbReference type="GO" id="GO:0003724">
    <property type="term" value="F:RNA helicase activity"/>
    <property type="evidence" value="ECO:0000318"/>
    <property type="project" value="GO_Central"/>
</dbReference>
<dbReference type="GO" id="GO:0006401">
    <property type="term" value="P:RNA catabolic process"/>
    <property type="evidence" value="ECO:0007669"/>
    <property type="project" value="UniProtKB-UniRule"/>
</dbReference>
<dbReference type="CDD" id="cd00268">
    <property type="entry name" value="DEADc"/>
    <property type="match status" value="1"/>
</dbReference>
<dbReference type="CDD" id="cd18787">
    <property type="entry name" value="SF2_C_DEAD"/>
    <property type="match status" value="1"/>
</dbReference>
<dbReference type="FunFam" id="3.40.50.300:FF:000008">
    <property type="entry name" value="ATP-dependent RNA helicase RhlB"/>
    <property type="match status" value="1"/>
</dbReference>
<dbReference type="FunFam" id="3.40.50.300:FF:000312">
    <property type="entry name" value="ATP-dependent RNA helicase RhlB"/>
    <property type="match status" value="1"/>
</dbReference>
<dbReference type="Gene3D" id="3.40.50.300">
    <property type="entry name" value="P-loop containing nucleotide triphosphate hydrolases"/>
    <property type="match status" value="2"/>
</dbReference>
<dbReference type="HAMAP" id="MF_00661">
    <property type="entry name" value="DEAD_helicase_RhlB"/>
    <property type="match status" value="1"/>
</dbReference>
<dbReference type="InterPro" id="IPR011545">
    <property type="entry name" value="DEAD/DEAH_box_helicase_dom"/>
</dbReference>
<dbReference type="InterPro" id="IPR050079">
    <property type="entry name" value="DEAD_box_RNA_helicase"/>
</dbReference>
<dbReference type="InterPro" id="IPR014001">
    <property type="entry name" value="Helicase_ATP-bd"/>
</dbReference>
<dbReference type="InterPro" id="IPR001650">
    <property type="entry name" value="Helicase_C-like"/>
</dbReference>
<dbReference type="InterPro" id="IPR027417">
    <property type="entry name" value="P-loop_NTPase"/>
</dbReference>
<dbReference type="InterPro" id="IPR000629">
    <property type="entry name" value="RNA-helicase_DEAD-box_CS"/>
</dbReference>
<dbReference type="InterPro" id="IPR023554">
    <property type="entry name" value="RNA_helicase_ATP-dep_RhlB"/>
</dbReference>
<dbReference type="InterPro" id="IPR014014">
    <property type="entry name" value="RNA_helicase_DEAD_Q_motif"/>
</dbReference>
<dbReference type="NCBIfam" id="NF003419">
    <property type="entry name" value="PRK04837.1"/>
    <property type="match status" value="1"/>
</dbReference>
<dbReference type="PANTHER" id="PTHR47959:SF10">
    <property type="entry name" value="ATP-DEPENDENT RNA HELICASE RHLB"/>
    <property type="match status" value="1"/>
</dbReference>
<dbReference type="PANTHER" id="PTHR47959">
    <property type="entry name" value="ATP-DEPENDENT RNA HELICASE RHLE-RELATED"/>
    <property type="match status" value="1"/>
</dbReference>
<dbReference type="Pfam" id="PF00270">
    <property type="entry name" value="DEAD"/>
    <property type="match status" value="1"/>
</dbReference>
<dbReference type="Pfam" id="PF00271">
    <property type="entry name" value="Helicase_C"/>
    <property type="match status" value="1"/>
</dbReference>
<dbReference type="SMART" id="SM00487">
    <property type="entry name" value="DEXDc"/>
    <property type="match status" value="1"/>
</dbReference>
<dbReference type="SMART" id="SM00490">
    <property type="entry name" value="HELICc"/>
    <property type="match status" value="1"/>
</dbReference>
<dbReference type="SUPFAM" id="SSF52540">
    <property type="entry name" value="P-loop containing nucleoside triphosphate hydrolases"/>
    <property type="match status" value="1"/>
</dbReference>
<dbReference type="PROSITE" id="PS00039">
    <property type="entry name" value="DEAD_ATP_HELICASE"/>
    <property type="match status" value="1"/>
</dbReference>
<dbReference type="PROSITE" id="PS51192">
    <property type="entry name" value="HELICASE_ATP_BIND_1"/>
    <property type="match status" value="1"/>
</dbReference>
<dbReference type="PROSITE" id="PS51194">
    <property type="entry name" value="HELICASE_CTER"/>
    <property type="match status" value="1"/>
</dbReference>
<dbReference type="PROSITE" id="PS51195">
    <property type="entry name" value="Q_MOTIF"/>
    <property type="match status" value="1"/>
</dbReference>
<accession>P0A2P0</accession>
<accession>P40863</accession>
<accession>Q9L6R8</accession>
<keyword id="KW-0067">ATP-binding</keyword>
<keyword id="KW-0963">Cytoplasm</keyword>
<keyword id="KW-0347">Helicase</keyword>
<keyword id="KW-0378">Hydrolase</keyword>
<keyword id="KW-0547">Nucleotide-binding</keyword>
<keyword id="KW-1185">Reference proteome</keyword>
<keyword id="KW-0694">RNA-binding</keyword>
<gene>
    <name evidence="2" type="primary">rhlB</name>
    <name type="ordered locus">STM3914</name>
    <name type="ORF">STMD1.76</name>
</gene>
<proteinExistence type="inferred from homology"/>
<reference key="1">
    <citation type="journal article" date="2001" name="Nature">
        <title>Complete genome sequence of Salmonella enterica serovar Typhimurium LT2.</title>
        <authorList>
            <person name="McClelland M."/>
            <person name="Sanderson K.E."/>
            <person name="Spieth J."/>
            <person name="Clifton S.W."/>
            <person name="Latreille P."/>
            <person name="Courtney L."/>
            <person name="Porwollik S."/>
            <person name="Ali J."/>
            <person name="Dante M."/>
            <person name="Du F."/>
            <person name="Hou S."/>
            <person name="Layman D."/>
            <person name="Leonard S."/>
            <person name="Nguyen C."/>
            <person name="Scott K."/>
            <person name="Holmes A."/>
            <person name="Grewal N."/>
            <person name="Mulvaney E."/>
            <person name="Ryan E."/>
            <person name="Sun H."/>
            <person name="Florea L."/>
            <person name="Miller W."/>
            <person name="Stoneking T."/>
            <person name="Nhan M."/>
            <person name="Waterston R."/>
            <person name="Wilson R.K."/>
        </authorList>
    </citation>
    <scope>NUCLEOTIDE SEQUENCE [LARGE SCALE GENOMIC DNA]</scope>
    <source>
        <strain>LT2 / SGSC1412 / ATCC 700720</strain>
    </source>
</reference>
<reference key="2">
    <citation type="journal article" date="1992" name="Nucleic Acids Res.">
        <title>Cloning and sequence of thioredoxin gene of Salmonella typhimurium LT2.</title>
        <authorList>
            <person name="Kotani H."/>
            <person name="Nakajima K."/>
        </authorList>
    </citation>
    <scope>NUCLEOTIDE SEQUENCE [GENOMIC DNA] OF 1-57</scope>
    <source>
        <strain>LT2</strain>
    </source>
</reference>
<reference key="3">
    <citation type="journal article" date="1994" name="Nat. Genet.">
        <title>Large scale bacterial gene discovery by similarity search.</title>
        <authorList>
            <person name="Robison K."/>
            <person name="Gilbert W."/>
            <person name="Church G.M."/>
        </authorList>
    </citation>
    <scope>IDENTIFICATION</scope>
</reference>
<evidence type="ECO:0000250" key="1"/>
<evidence type="ECO:0000255" key="2">
    <source>
        <dbReference type="HAMAP-Rule" id="MF_00661"/>
    </source>
</evidence>
<evidence type="ECO:0000256" key="3">
    <source>
        <dbReference type="SAM" id="MobiDB-lite"/>
    </source>
</evidence>
<evidence type="ECO:0000305" key="4"/>
<organism>
    <name type="scientific">Salmonella typhimurium (strain LT2 / SGSC1412 / ATCC 700720)</name>
    <dbReference type="NCBI Taxonomy" id="99287"/>
    <lineage>
        <taxon>Bacteria</taxon>
        <taxon>Pseudomonadati</taxon>
        <taxon>Pseudomonadota</taxon>
        <taxon>Gammaproteobacteria</taxon>
        <taxon>Enterobacterales</taxon>
        <taxon>Enterobacteriaceae</taxon>
        <taxon>Salmonella</taxon>
    </lineage>
</organism>